<keyword id="KW-0436">Ligase</keyword>
<keyword id="KW-0596">Phosphopantetheine</keyword>
<keyword id="KW-0597">Phosphoprotein</keyword>
<keyword id="KW-1185">Reference proteome</keyword>
<keyword id="KW-0677">Repeat</keyword>
<feature type="chain" id="PRO_0000450560" description="Nonribosomal peptide synthetase GRA1">
    <location>
        <begin position="1"/>
        <end position="7839"/>
    </location>
</feature>
<feature type="domain" description="Carrier 1" evidence="2">
    <location>
        <begin position="793"/>
        <end position="866"/>
    </location>
</feature>
<feature type="domain" description="Carrier 2" evidence="2">
    <location>
        <begin position="1880"/>
        <end position="1957"/>
    </location>
</feature>
<feature type="domain" description="Carrier 3" evidence="2">
    <location>
        <begin position="2963"/>
        <end position="3040"/>
    </location>
</feature>
<feature type="domain" description="Carrier 4" evidence="2">
    <location>
        <begin position="4057"/>
        <end position="4134"/>
    </location>
</feature>
<feature type="domain" description="Carrier 5" evidence="2">
    <location>
        <begin position="5113"/>
        <end position="5189"/>
    </location>
</feature>
<feature type="domain" description="Carrier 6" evidence="2">
    <location>
        <begin position="6207"/>
        <end position="6282"/>
    </location>
</feature>
<feature type="domain" description="Carrier 7" evidence="2">
    <location>
        <begin position="7290"/>
        <end position="7366"/>
    </location>
</feature>
<feature type="region of interest" description="Disordered" evidence="3">
    <location>
        <begin position="1"/>
        <end position="26"/>
    </location>
</feature>
<feature type="region of interest" description="Adenylation 1" evidence="1 9">
    <location>
        <begin position="264"/>
        <end position="650"/>
    </location>
</feature>
<feature type="region of interest" description="Condensation 1" evidence="1 9">
    <location>
        <begin position="916"/>
        <end position="1332"/>
    </location>
</feature>
<feature type="region of interest" description="Adenylation 2" evidence="1 9">
    <location>
        <begin position="1351"/>
        <end position="1742"/>
    </location>
</feature>
<feature type="region of interest" description="Condensation 2" evidence="1 9">
    <location>
        <begin position="1997"/>
        <end position="2413"/>
    </location>
</feature>
<feature type="region of interest" description="Adenylation 3" evidence="1 9">
    <location>
        <begin position="2432"/>
        <end position="2828"/>
    </location>
</feature>
<feature type="region of interest" description="Condensation 3" evidence="1 9">
    <location>
        <begin position="3084"/>
        <end position="3496"/>
    </location>
</feature>
<feature type="region of interest" description="Adenylation 4" evidence="1 9">
    <location>
        <begin position="3520"/>
        <end position="3923"/>
    </location>
</feature>
<feature type="region of interest" description="Condensation 4" evidence="1 9">
    <location>
        <begin position="4234"/>
        <end position="4569"/>
    </location>
</feature>
<feature type="region of interest" description="Adenylation 5" evidence="1 9">
    <location>
        <begin position="4591"/>
        <end position="4982"/>
    </location>
</feature>
<feature type="region of interest" description="Condensation 5" evidence="1 9">
    <location>
        <begin position="5224"/>
        <end position="5653"/>
    </location>
</feature>
<feature type="region of interest" description="Adenylation 6" evidence="1 9">
    <location>
        <begin position="5671"/>
        <end position="6069"/>
    </location>
</feature>
<feature type="region of interest" description="Condensation 6" evidence="1 9">
    <location>
        <begin position="6321"/>
        <end position="6730"/>
    </location>
</feature>
<feature type="region of interest" description="Adenylation 7" evidence="1 9">
    <location>
        <begin position="6756"/>
        <end position="7147"/>
    </location>
</feature>
<feature type="region of interest" description="Condensation7" evidence="1 9">
    <location>
        <begin position="7404"/>
        <end position="7704"/>
    </location>
</feature>
<feature type="compositionally biased region" description="Polar residues" evidence="3">
    <location>
        <begin position="1"/>
        <end position="23"/>
    </location>
</feature>
<feature type="modified residue" description="O-(pantetheine 4'-phosphoryl)serine" evidence="2">
    <location>
        <position position="827"/>
    </location>
</feature>
<feature type="modified residue" description="O-(pantetheine 4'-phosphoryl)serine" evidence="2">
    <location>
        <position position="1918"/>
    </location>
</feature>
<feature type="modified residue" description="O-(pantetheine 4'-phosphoryl)serine" evidence="2">
    <location>
        <position position="3001"/>
    </location>
</feature>
<feature type="modified residue" description="O-(pantetheine 4'-phosphoryl)serine" evidence="2">
    <location>
        <position position="4095"/>
    </location>
</feature>
<feature type="modified residue" description="O-(pantetheine 4'-phosphoryl)serine" evidence="2">
    <location>
        <position position="5150"/>
    </location>
</feature>
<feature type="modified residue" description="O-(pantetheine 4'-phosphoryl)serine" evidence="2">
    <location>
        <position position="6243"/>
    </location>
</feature>
<feature type="modified residue" description="O-(pantetheine 4'-phosphoryl)serine" evidence="2">
    <location>
        <position position="7327"/>
    </location>
</feature>
<accession>A0A098D1P1</accession>
<accession>A0A0E0RKU6</accession>
<evidence type="ECO:0000255" key="1"/>
<evidence type="ECO:0000255" key="2">
    <source>
        <dbReference type="PROSITE-ProRule" id="PRU00258"/>
    </source>
</evidence>
<evidence type="ECO:0000256" key="3">
    <source>
        <dbReference type="SAM" id="MobiDB-lite"/>
    </source>
</evidence>
<evidence type="ECO:0000269" key="4">
    <source>
    </source>
</evidence>
<evidence type="ECO:0000269" key="5">
    <source>
    </source>
</evidence>
<evidence type="ECO:0000303" key="6">
    <source>
    </source>
</evidence>
<evidence type="ECO:0000303" key="7">
    <source>
    </source>
</evidence>
<evidence type="ECO:0000305" key="8"/>
<evidence type="ECO:0000305" key="9">
    <source>
    </source>
</evidence>
<name>GRA1_GIBZE</name>
<protein>
    <recommendedName>
        <fullName evidence="7">Nonribosomal peptide synthetase GRA1</fullName>
        <ecNumber evidence="5">6.3.2.-</ecNumber>
    </recommendedName>
    <alternativeName>
        <fullName evidence="7">Gramillins biosynthetic cluster protein 1</fullName>
    </alternativeName>
    <alternativeName>
        <fullName evidence="6">Nonribosomal peptide synthetase 8</fullName>
        <shortName evidence="6">NRPS8</shortName>
    </alternativeName>
</protein>
<gene>
    <name evidence="7" type="primary">GRA1</name>
    <name type="synonym">NRPS8</name>
    <name type="ORF">FG00042</name>
    <name type="ORF">FGRAMPH1_01T00143</name>
    <name type="ORF">FGSG_15673</name>
</gene>
<sequence length="7839" mass="863791">MALLNGKSTLPNGHNSSIESPNGYTEHEMPIPSDWQRYLIDIDHAAVSLFKSPRPDDPVATVKSTHRFVLTEETLLVSIPSTIYAAFAIVMSEYSNSQDVLFGVRAESRVVPFRVLVDKNDQISSFLDQVASKWKMAQNFPPDMPVPAVPNVLAFVDDKMSASGNGLVLEENEEISMVISLDSKEITIQVLFNPACADLVAVQRFLKQLETVFHQLCKPSAGQLIKEVKSITADDIRDMTTWNSASMTPYTPECIHDVVKQHVLASPNSCAVHGWDGDLSYVQLDEESSRLANYLYRKGVRPHDLVPLAFYKSIWFTICALALSKLGAAIVPLDPQWPKDRQMYIINDIESSRIITNIPNSASAYAGLEIIDISQLSLANEPATARYPVTPEHAIYAYYTSGTTGQPKGCVIEHGAFVSSSSKRIKFMGRNKDSRLLQVTTYTFDVAMDDIFFTLMAGGCLCVPTREECLNDIVGAVEKYNCNTLHVAPSLARDLQPSQLPSLRTLILGGEAMSANILRTWAGRVGLYNSYGPTECCIACCVNLIQSADENPRNIGRPIDCSYWLVRPGDIDTLAAIGTVGEILIHGPNLGRGYLNKPELTAKAFPQNISWASEVGLPAEARFYRTGDLARFNADGSVCLLGRIDDQVKIHGQRIELGEIDYRLSQCLPAGIEAISGVVNFRDREVATLVAFIQTVNSDSNSAKSSGSLALADTDNWNQFHRLRSHVMEQLSHNLPSYMVPSVFLPVQNFLYFNQGKLNRRGMFQQASRFRLDDILTINTSAGHKADDTSSWSAEALVLRQLWAIALGLEEKNIHLDSRFADLGGDSLAAIRLGILCRPYDIELSVDDILQQSTILLQAEMSEKKKKQNIEKHEVAQEAILPAGQRFGLLGQDVDVGMLCEQTSAQCHIDSGAIDDIYPASPLQESLMALSMDDSPYISQFVFRLPDNLDMYRFRKAWKSTFSDIPILRTRIIYLQDFGTLQVVVDEDIEWTEHKNITLSQFLKDDQERLMQVGDRLVRFTIVQESPGTSFLVWTCHHACHDGRTVDQTLRVVGAKYLDRPVSSPVPYRYYIQFQQDVYRRDWQEYWTRNLAGASVSAFPAQDKAVHQPVTDASHQYSFSMPRISTERSDTSVFSPSSILRAAWALIVSRYEESEDVTFGTIVGANASTIADADAIVGPTNNTIPVRVLASEGWTVEAFVSHVKQQFEYSPFQHVGLANLKDLSPEMQDIVNIRNIFVVQSHFVGQTGSEMNLERVAVSAHEGFKYPLVVECFQENASQVLVNFIYDSHILDQSQISRLALQLENTINLLVHNPHKTLNQIEILSPSDVAQILEWQADMPSPSSLCLHQQFFTQVKRSPDAIALCTWEGQFTYLEVQNLVESMAIYLQDAGVRRGDRILCQIEKSACAVISFLAILKLGGTCVLLGTTWPRIRSEVIAEDTKAQYLLVSPTLSNALISLVPNILEVSTSFIQRLPRPTQYVDSVYQPSDLAFILFTSGSTGTPKGVQLAHSGLVTNFASMAQHMQYTSETRLFQFSDFTFDLSIYDIFGMLMVGGCICMPSEQERHEDLMGSMNRMKVNTVTATPSIAKMIKPSSVPTLRCIKLGGEALDSTTLATLAGSLDTENGYGVTECSVWSTCTDRLSPDADPRNVGRGINCYTWIVDAKNPNRLRPIGAVGELILQGPGVALGYVNKPEESKRVFLDALPWSTDKGRSYRTGDLVKYAPDGSLIYVQRKDAQLKIRGQRFESSEVESHLQQCGLPEGNFCVDLVKTQTGPVVVVFLCMNKEVEMKDASKLGVVPLDQQDSSIVDQMAQAMRMLIPRLPGYMIPQAVIPVTQMPVSNSGKLDRRALRSLADGMSPGQLRQLLRPSEDSIYHKRTELETEAERTMAVLWSQVLAIDDSHVFHTDDDFFQLGGHSIALMRLISAGKGHGMSISYRDAFLHPSLGAMSRQATVSDAEEHALPRLIQPFAMAPSDVDGLIQESSRACQVDPQDIVDLYPCTPFQESTMTLSLSKPGLYTAQFVWSLPDTIDLARLRSAWETLVRSDAILRTRLIYSSKYWQVVTRTGIDFALADMSIDSYLEEDKARPIRLGQPLNRLAIIQDQTSATQYLAWTAHHSTYDGHSWSSIQDRLSDLYTQGGSKLPLVPYNVFVDHIVNNPLPETGLSFWKDMMSGARMPSFPKLPLNNDLQSTNSVVTQSVSLPRQTSSDVTVASAIQGAWAILLGQYENSDDVLFAATLSGRNVPVDGIENIAGPTSCTVPMRVRTDPGQSTRSWLRSVQQSYVDAATYGQIGMNEISLVNKDAEVARHIRSLLIVQAITSKTVSGLERIGCTKIETKAKGFLSYALVVECKPSMENNEMEVMVSYDANLLDGPSVYRLVWQLEFTLQQLLSDNCKTIRDLCLISPSDMETISTWNKELPKTVETTVHALFDRRLSQKHSATAISSWDGEMTYVELDNYSSSLAAHLMASGVKPGQYIPLCFEKTMWMVVSMLAVLKAGGACVSLDPNHPSRHHQVILSRVSADIVITSPANKHRFPGNRVLSVSAALMTKIAHEPYAAPLVSAHQPAFVVFTSGTTGEPKGIILEHRALCTSIEAHGQFMEFGPESRVLQFASYTFDVSIAEMLTTLAFGGCICIPSDHARLNNLSGAIKTLRVNQAYLTASVAALLDPDTLNGSLKVLSVGGEQVGQEVLTRWGDRTKLLNMYGPAETTIWCGGKHSVKPDGDAANIGYGVGARMWLTDVNDVQKLAPIGAVGEIVIEGPLLARGYINGNNDVFVESPDWAKAFNVFDGFDQVTGRVYRSGDLGRYQSDGSIAICGRRDTQLKIRGQRVEVSQIEDQLQRLAPDFKCVVGVLRTDTPTLVAFIGLEGPTKDQGLTDSMDLVVRTRDLSEEVRDLMGSLESRLANILPPYSVPAHYLVLRNIPLMTSGKTDRKKLQVIASEHLEHSVDASKPQMLQQVKKIPTTQMEWNLFGLWAQVLGINNLASLGTDDNFFRCGGDSLKAMQLASLASQRGITLQVSDLFKNPVLADLAQAIVLDTPKEIETSPVQDIPDPYSLLPNDTKEQVQAQAALDCDVSPNLIDDIYPCTPLQDGLFALSQKQPGAYVAQFKFSVANRINIRRLRQAWETVCDQAPILRSRLVSTPSGIVQVVLTEDFWWYERHDIDTSAELEQDKAAIGGLGQPLQRFRLVQDVARGQKTLVWTIHHAAFDGWSIERILESVRLVYQDQPIPNPYVPFNAFIRYSSGIVENHESKEFWQSYLSNITPPTFPALPSPSYQALADTVIESKMSNLKLPDSFTLTSILRAAWAIVVSTYQGSDDVVFLTTVFGRNAPLAGIDKIIGPTITTIPIRVKLNDPSTTVDMLLQAVQESATETMAFEQLGLQSIRNLNADCKAACMAQNLLVIQTSRGEDATVPFGGFEKLPDETKGFSTIPFTLECTATSEGGLSIEASFDSKIVDPAQANRIIKTFEHVTQQMCHKHLKLNQVDLISDSDHDLIRNWNSTMPCAKEECIHHRLDRLAVSNPDAEAVCAWDGIFTFKELNSLSNRYAVYLQSQGIKPGNIVPFCFDKSKWVVVAMLAIMKVGAASVTVDPKHPPGRRDGILSAVSASAVVTTSGYTHLFDHNASHGLKTLVLDGKTMDSIADSLQPADIESTPNDAAFVVYTSGSTGTPKAVVIEHRGICTGAFHLAKLIHLGPQTRCLQFAAFTFDQSFGDIFHTLLLGGCVCIPSESDRLNDLVGSILRLRANTAILTPTVACSIDPSELGSHKMDVLTVGGEPVTAEAIRTWAPHVRLFNTYGPAECSVTTIGRPINMQNVTQPANIGRGLGALVWLTYPDDPERLTPIGTVGEILMEGPQLARGYLNDSRNTNAAYITDPAWSHRFPVPGMSTPRRFYRTGDLGQYQADGTIVCLGRRDSQVKLRGQRMELGEVEHHISTYSQSALEIIADVFTPPNGTATLAACISLKGYETKGDECQVEVDEQVLTIFSAMLSGLDSYLSRMLPAYMIPTLYVPVTHIPLTPSGKKDRKSIRLMLARITVDQVQKMRTILGESEPSRPLTEREKDLQQLWVKVLKLDGETVINANTNFFHSGGDSVRAMALVAAARRKGTHLTVAEIFSHPKLCDMAAMTTSLSQKGQPVQLAPYSLLRSTPSADTMSEACGACGVDHSQIQDMYPTTPLQQALVALSIKDSGAYVSNFVFLLPSHLDVELFQRAWECVYVVVSEKVRWNYGDNLEEFVGRQSQKGFKLGQRMAESAIVRQKDGKTFFILILHHAIYDGWSLRRLLEAAEQIYHGQAIPRFVIFNHFVAHVSRSEDNRAPAFWRSYLEGLPKTSFIQQPTTAYKPTADHIISQDVSLRDNFTARSGVTITSLMRAAWAMVLATYNSDQTPDVVFGTVVGGRSLDLADIEYIDGPTIATVPFRVTFDPTAPVDMLLQSVQTMSTQILQHEQFGVQNIIKVSDDGRLACDFETLLVVQDSAEIKASSGFLDMDNIYQRPDRPPGIPLVVECSPSAGNLHLEIHFDAKLLEETQAKRLIRQLAHVIKQLANSVPSLSLSCIDMMNPDDAEEIKSWNKKPPPTFDGCLHEMVLQHSKGCPDRIAIQSWDTSLTYSELDHLSSILAQYLNSLGVRPEDKVPFCMDKSAFAIVAMLAILRSGGCFVPLDMSSPTKRLKNIIKRVNAKFILVSPKTRPLFEDVEGQLVEVTKSMIDGLPELSKSLYIPSATHPAYVLFTSGSTGTPKGVVVEHGAIATSVSSFSSYLGFNPDVRVLQFAPYVFDVSIGEIFACLVSGGCLCIASESSLMDDLPLCIQQLDVNFAVLTPTFARTLTPSEVPSLKTLVLGGEPLRKRDVETWATTVRLFNGYGPTEASVLAMAYRVPDSQSPCNLIGLSVGCRSWIVSPSDPNILPPIGAVGELVLEGNTLARGYLDTESAQGAFIEDPKFLDSLVPEATGSRVYKTGDLVRYNAEGIVEFVSRKDTQVKFHGRRIELEDIEHNAMEAMPEAKHLVVELVRLGNSQQEALALFFHTDNQRTANEKDPILPIGQDLVARLRGVKSNLAVTLPSYMVPSLYIPLSTWPSTSNGKVNRHLLRNLVLHFTSEAAAAYSLHTGDSSALSSDEESQLAQLWATTLNIDARTIGSSDSFFQHGGDSIAAVRLVTLAREQGIGLSVDTLLSKPILRDMALCMTSAQPVRETIVRPFNQIHSHQEEVLLAASQFGVEPAMIEDIYPCSALQNSLMAVSLKNSSAYLSQFVVAIPEGLDIDVLQAAWNTVYSDSPILRTRFYQPSLNNMQHPILQAVVDQKPIWGTEENLDEFLGRDKQTPTGLGSPLTRFTIVVDKTNQERLFVLTAHHAIYDGWSIASTFEKVDMILKGIALPKSVGYNIFIHHLQSLNTQENKAFWSSTLEGATQTLFPQLPSHSYEPATDNSLKHQFAYPADLAPHSTVTMATIVRGAWGLLVSKYCDSPDVVFGTTVNGRMAPIPGIEMVQGPTMATIPFRTRISTNQSVLSYLEQLHVQQIESIPHEQYGLQNIKHLSEPIARVCEFQNLLVIQSSRDSSLSDSGFAFGTVKNMDQGSFSMQGFHNMALVVECSIDSEVIHVTLNFDSNVIPKTQVQRIAHHFEHLILQLQAGSTEPDLKIDQIDHVSPSDQAEILEWNSSIPGSVLCCVHELFESRARLQPSAPAICARDGQLTYFELQAKATTLAAYLSLQGLGRGVLVPLLFEKSCWAVVAMMAVLKAGAANVALNPEHPQARLEDSINATQGEVILCSRKHFELASSFDMQVIVVDEDLFHHIDLPSLASSDPWSPTYPAGPDDPCFVLFTSGTTGKPKGIVINHAAMCSSINGHSSTLRYSTGPGSRNFQFTAYTSDVSIGEIFTSLAVGSCVCVPSDYDRMNNLAGSMRDLNVTWAFLTPSVAALLKPEEVPCLRTLLFGGETATPENISTWADSLYLINSAGPAECCIWTHCNPGISTADIGSNWGYNLGCATWITDPNNPSVLMPIGVTGEMLIEGPNLAQGYLNDPERTQKSFVEIYLAGKKRRLYRTGDLARFMADGKTQFLGRRDTQVKLRGQRVEIGEIENQIRRHIPDSTLVAVEMVRIAEGKSAPLLAAFHAPKDPRAIDDTGDTPQAEVLSAAMVQELGVILDELAAKLAETLPQHMIPTAFIPLTSMPLTASAKTDRNVLSALASTISVEQLSYYALTSAEKQFPSSLAEQQMAKLWQEVLNTKIDIGIHDSFFRIGGDSISAMHLVSRSRAVGISLTVEQIFKNPTLQHMAAIATTFTESMGSTTVEPFSLISPTVTFDIVCSEAQEQCQVTAQQIQDIYPCSALQEGLLALSLKTAGSYLAQMVFEIPDELDLERFKDAWAHMVAKAAPILRTQFFESPSQGHQLMQAVIDAPLEWTYSDKLDEYLMTDSTKIVQLGQPTSRYAIISNTQRYFVFTAHHAVYDGASLGPMFEAVEKIYSENYVSSSSPYSLFVQYLLGMDSDSSKAYWEMSLQGASAPTFPRLPSIGYRPMTNDALKRTIALPARHDTEFTMSSIARAAWSLVVASYSDTDDIVFASTVGGRTLPIAGIENIIGPTLATVPVRVTIDRTASVSDFLTMIQEQSTSMMPHEQYGLQNIKRISPSVSAASDLHNLLVINTSSVEGLGSGGLGLKQVDLGRADGFHNFALSIECTAEADALSLAVSFDDHVIDPRQIRRVVNQFEHMLQQLSTCAIHTRLADMDLTGPADIAEIHLWNSHVPPPQQNYVHTLVEQRVKSQPDSPAVCSWEGELTYRELDELSSSLANHLITAFAVAPGTLIPILFEKSIWTVVTMLAVLKAGGANVPMDPQQPLARLQELAADIGASLAISSSKYQDKAQNVTARSMFVDREVLTTIEKTPICPASTVSYEDPAFILFTSGSTGKPKAILIDHTAFTSSIKGHGEILRYRKGSRNLQFTAYISDVSIGEIFTSLSAGACVCVPSDFERMNDLAGSINRMRVDWAFLTPSVASLLDATKVPSLKTLVFGGETATPENIAAWAPRLFLINSFGPAECSIWTHCDPGVGITHNGSHIGYAIGCATWIVDPNDYNKLAPIGSIGELIVEGPNVARGYLDEAKTKEAFLKTAAWMPSGRKNRLYKMGDLVRYLPDGKIQFLGRKDSQIKLHGQRIELGEIEHQLRVALAKHDADRNVQVAVEMVSLSTDTSTSSLLTAFVDYEGISSDDGPAQLSSGEKAQQWARQMFRVAHEHLALTLPRHMIPSVLLPLTRMPLNGSAKTDRKVLKQIVSGMDTMQRALYSLARVETNIIKAATPNEKTLHHIWSEILSISPESFGVEANFMSLGGDSIAAMKLIPIAQAAGLSISVEDLFTRPVLHDLARVSRQSITEHSQDIPPFYIMEQAQNQDELLAEASTHCNLPPDAIHDIYPCTQVQERFISTTQIQPGAYTLQDVFKISSDMDLAQFKKAWTRTVASHVALRTRIFLSNDRHQHLQVVQKASETLDWIHSENLEEYLKADKAKSMEYGGSLVRSAIVSEGVERHFVVTYHHSIYDAVSLGIIMNDLEAFYLDDLYEVNEPKYNAFVHHLTQVKSQELSSQFWRDHLAGDRSTITPLYQPVDGARVDSLLRHTITFPMHYQQSQLSLTVAAFTYAALSLVTARLTGSSSAVLELTLLGRSVPVKGIERMVGTTVTSAPLRIDTTAGNDKPWTVTVEDYLDYAKKRASSIVLHEHTSMPDPETKHITSAALPIVVHPSNPHKEALGTGIGLQRHEIQSMGQNSSAFYMDIAALDGEGLEINLPFDMPLDEVTRNVDHETDLRMCDIIEQEFRGYIILALVNRLNFVPSCWTMGRWLNEAPRSTY</sequence>
<reference key="1">
    <citation type="journal article" date="2007" name="Science">
        <title>The Fusarium graminearum genome reveals a link between localized polymorphism and pathogen specialization.</title>
        <authorList>
            <person name="Cuomo C.A."/>
            <person name="Gueldener U."/>
            <person name="Xu J.-R."/>
            <person name="Trail F."/>
            <person name="Turgeon B.G."/>
            <person name="Di Pietro A."/>
            <person name="Walton J.D."/>
            <person name="Ma L.-J."/>
            <person name="Baker S.E."/>
            <person name="Rep M."/>
            <person name="Adam G."/>
            <person name="Antoniw J."/>
            <person name="Baldwin T."/>
            <person name="Calvo S.E."/>
            <person name="Chang Y.-L."/>
            <person name="DeCaprio D."/>
            <person name="Gale L.R."/>
            <person name="Gnerre S."/>
            <person name="Goswami R.S."/>
            <person name="Hammond-Kosack K."/>
            <person name="Harris L.J."/>
            <person name="Hilburn K."/>
            <person name="Kennell J.C."/>
            <person name="Kroken S."/>
            <person name="Magnuson J.K."/>
            <person name="Mannhaupt G."/>
            <person name="Mauceli E.W."/>
            <person name="Mewes H.-W."/>
            <person name="Mitterbauer R."/>
            <person name="Muehlbauer G."/>
            <person name="Muensterkoetter M."/>
            <person name="Nelson D."/>
            <person name="O'Donnell K."/>
            <person name="Ouellet T."/>
            <person name="Qi W."/>
            <person name="Quesneville H."/>
            <person name="Roncero M.I.G."/>
            <person name="Seong K.-Y."/>
            <person name="Tetko I.V."/>
            <person name="Urban M."/>
            <person name="Waalwijk C."/>
            <person name="Ward T.J."/>
            <person name="Yao J."/>
            <person name="Birren B.W."/>
            <person name="Kistler H.C."/>
        </authorList>
    </citation>
    <scope>NUCLEOTIDE SEQUENCE [LARGE SCALE GENOMIC DNA]</scope>
    <source>
        <strain>ATCC MYA-4620 / CBS 123657 / FGSC 9075 / NRRL 31084 / PH-1</strain>
    </source>
</reference>
<reference key="2">
    <citation type="journal article" date="2010" name="Nature">
        <title>Comparative genomics reveals mobile pathogenicity chromosomes in Fusarium.</title>
        <authorList>
            <person name="Ma L.-J."/>
            <person name="van der Does H.C."/>
            <person name="Borkovich K.A."/>
            <person name="Coleman J.J."/>
            <person name="Daboussi M.-J."/>
            <person name="Di Pietro A."/>
            <person name="Dufresne M."/>
            <person name="Freitag M."/>
            <person name="Grabherr M."/>
            <person name="Henrissat B."/>
            <person name="Houterman P.M."/>
            <person name="Kang S."/>
            <person name="Shim W.-B."/>
            <person name="Woloshuk C."/>
            <person name="Xie X."/>
            <person name="Xu J.-R."/>
            <person name="Antoniw J."/>
            <person name="Baker S.E."/>
            <person name="Bluhm B.H."/>
            <person name="Breakspear A."/>
            <person name="Brown D.W."/>
            <person name="Butchko R.A.E."/>
            <person name="Chapman S."/>
            <person name="Coulson R."/>
            <person name="Coutinho P.M."/>
            <person name="Danchin E.G.J."/>
            <person name="Diener A."/>
            <person name="Gale L.R."/>
            <person name="Gardiner D.M."/>
            <person name="Goff S."/>
            <person name="Hammond-Kosack K.E."/>
            <person name="Hilburn K."/>
            <person name="Hua-Van A."/>
            <person name="Jonkers W."/>
            <person name="Kazan K."/>
            <person name="Kodira C.D."/>
            <person name="Koehrsen M."/>
            <person name="Kumar L."/>
            <person name="Lee Y.-H."/>
            <person name="Li L."/>
            <person name="Manners J.M."/>
            <person name="Miranda-Saavedra D."/>
            <person name="Mukherjee M."/>
            <person name="Park G."/>
            <person name="Park J."/>
            <person name="Park S.-Y."/>
            <person name="Proctor R.H."/>
            <person name="Regev A."/>
            <person name="Ruiz-Roldan M.C."/>
            <person name="Sain D."/>
            <person name="Sakthikumar S."/>
            <person name="Sykes S."/>
            <person name="Schwartz D.C."/>
            <person name="Turgeon B.G."/>
            <person name="Wapinski I."/>
            <person name="Yoder O."/>
            <person name="Young S."/>
            <person name="Zeng Q."/>
            <person name="Zhou S."/>
            <person name="Galagan J."/>
            <person name="Cuomo C.A."/>
            <person name="Kistler H.C."/>
            <person name="Rep M."/>
        </authorList>
    </citation>
    <scope>GENOME REANNOTATION</scope>
    <source>
        <strain>ATCC MYA-4620 / CBS 123657 / FGSC 9075 / NRRL 31084 / PH-1</strain>
    </source>
</reference>
<reference key="3">
    <citation type="journal article" date="2015" name="BMC Genomics">
        <title>The completed genome sequence of the pathogenic ascomycete fungus Fusarium graminearum.</title>
        <authorList>
            <person name="King R."/>
            <person name="Urban M."/>
            <person name="Hammond-Kosack M.C.U."/>
            <person name="Hassani-Pak K."/>
            <person name="Hammond-Kosack K.E."/>
        </authorList>
    </citation>
    <scope>NUCLEOTIDE SEQUENCE [LARGE SCALE GENOMIC DNA]</scope>
    <source>
        <strain>ATCC MYA-4620 / CBS 123657 / FGSC 9075 / NRRL 31084 / PH-1</strain>
    </source>
</reference>
<reference key="4">
    <citation type="journal article" date="2016" name="Fungal Biol.">
        <title>Host-preferential Fusarium graminearum gene expression during infection of wheat, barley, and maize.</title>
        <authorList>
            <person name="Harris L.J."/>
            <person name="Balcerzak M."/>
            <person name="Johnston A."/>
            <person name="Schneiderman D."/>
            <person name="Ouellet T."/>
        </authorList>
    </citation>
    <scope>INDUCTION</scope>
</reference>
<reference key="5">
    <citation type="journal article" date="2018" name="J. Am. Chem. Soc.">
        <title>Gramillin A and B: cyclic lipopeptides identified as the nonribosomal biosynthetic products of Fusarium graminearum.</title>
        <authorList>
            <person name="Bahadoor A."/>
            <person name="Brauer E.K."/>
            <person name="Bosnich W."/>
            <person name="Schneiderman D."/>
            <person name="Johnston A."/>
            <person name="Aubin Y."/>
            <person name="Blackwell B."/>
            <person name="Melanson J.E."/>
            <person name="Harris L.J."/>
        </authorList>
    </citation>
    <scope>FUNCTION</scope>
    <scope>DISRUPTION PHENOTYPE</scope>
    <scope>INDUCTION</scope>
    <scope>PATHWAY</scope>
</reference>
<dbReference type="EC" id="6.3.2.-" evidence="5"/>
<dbReference type="EMBL" id="HG970332">
    <property type="protein sequence ID" value="CEF71871.1"/>
    <property type="molecule type" value="Genomic_DNA"/>
</dbReference>
<dbReference type="SMR" id="A0A098D1P1"/>
<dbReference type="STRING" id="229533.A0A098D1P1"/>
<dbReference type="VEuPathDB" id="FungiDB:FGRAMPH1_01G00143"/>
<dbReference type="eggNOG" id="KOG1176">
    <property type="taxonomic scope" value="Eukaryota"/>
</dbReference>
<dbReference type="eggNOG" id="KOG1178">
    <property type="taxonomic scope" value="Eukaryota"/>
</dbReference>
<dbReference type="InParanoid" id="A0A098D1P1"/>
<dbReference type="Proteomes" id="UP000070720">
    <property type="component" value="Chromosome 1"/>
</dbReference>
<dbReference type="GO" id="GO:0005737">
    <property type="term" value="C:cytoplasm"/>
    <property type="evidence" value="ECO:0007669"/>
    <property type="project" value="TreeGrafter"/>
</dbReference>
<dbReference type="GO" id="GO:0016874">
    <property type="term" value="F:ligase activity"/>
    <property type="evidence" value="ECO:0007669"/>
    <property type="project" value="UniProtKB-KW"/>
</dbReference>
<dbReference type="GO" id="GO:0031177">
    <property type="term" value="F:phosphopantetheine binding"/>
    <property type="evidence" value="ECO:0007669"/>
    <property type="project" value="InterPro"/>
</dbReference>
<dbReference type="GO" id="GO:0043041">
    <property type="term" value="P:amino acid activation for nonribosomal peptide biosynthetic process"/>
    <property type="evidence" value="ECO:0007669"/>
    <property type="project" value="TreeGrafter"/>
</dbReference>
<dbReference type="GO" id="GO:0044550">
    <property type="term" value="P:secondary metabolite biosynthetic process"/>
    <property type="evidence" value="ECO:0007669"/>
    <property type="project" value="TreeGrafter"/>
</dbReference>
<dbReference type="CDD" id="cd05918">
    <property type="entry name" value="A_NRPS_SidN3_like"/>
    <property type="match status" value="7"/>
</dbReference>
<dbReference type="CDD" id="cd19545">
    <property type="entry name" value="FUM14_C_NRPS-like"/>
    <property type="match status" value="7"/>
</dbReference>
<dbReference type="FunFam" id="3.30.300.30:FF:000015">
    <property type="entry name" value="Nonribosomal peptide synthase SidD"/>
    <property type="match status" value="7"/>
</dbReference>
<dbReference type="FunFam" id="3.30.559.30:FF:000003">
    <property type="entry name" value="Nonribosomal peptide synthase SidD"/>
    <property type="match status" value="5"/>
</dbReference>
<dbReference type="FunFam" id="1.10.1200.10:FF:000005">
    <property type="entry name" value="Nonribosomal peptide synthetase 1"/>
    <property type="match status" value="2"/>
</dbReference>
<dbReference type="FunFam" id="3.40.50.12780:FF:000014">
    <property type="entry name" value="Nonribosomal peptide synthetase 1"/>
    <property type="match status" value="4"/>
</dbReference>
<dbReference type="Gene3D" id="3.30.300.30">
    <property type="match status" value="7"/>
</dbReference>
<dbReference type="Gene3D" id="1.10.1200.10">
    <property type="entry name" value="ACP-like"/>
    <property type="match status" value="7"/>
</dbReference>
<dbReference type="Gene3D" id="3.30.559.10">
    <property type="entry name" value="Chloramphenicol acetyltransferase-like domain"/>
    <property type="match status" value="8"/>
</dbReference>
<dbReference type="Gene3D" id="3.40.50.12780">
    <property type="entry name" value="N-terminal domain of ligase-like"/>
    <property type="match status" value="7"/>
</dbReference>
<dbReference type="Gene3D" id="3.30.559.30">
    <property type="entry name" value="Nonribosomal peptide synthetase, condensation domain"/>
    <property type="match status" value="8"/>
</dbReference>
<dbReference type="InterPro" id="IPR010071">
    <property type="entry name" value="AA_adenyl_dom"/>
</dbReference>
<dbReference type="InterPro" id="IPR036736">
    <property type="entry name" value="ACP-like_sf"/>
</dbReference>
<dbReference type="InterPro" id="IPR045851">
    <property type="entry name" value="AMP-bd_C_sf"/>
</dbReference>
<dbReference type="InterPro" id="IPR020845">
    <property type="entry name" value="AMP-binding_CS"/>
</dbReference>
<dbReference type="InterPro" id="IPR000873">
    <property type="entry name" value="AMP-dep_synth/lig_dom"/>
</dbReference>
<dbReference type="InterPro" id="IPR042099">
    <property type="entry name" value="ANL_N_sf"/>
</dbReference>
<dbReference type="InterPro" id="IPR023213">
    <property type="entry name" value="CAT-like_dom_sf"/>
</dbReference>
<dbReference type="InterPro" id="IPR001242">
    <property type="entry name" value="Condensatn"/>
</dbReference>
<dbReference type="InterPro" id="IPR020806">
    <property type="entry name" value="PKS_PP-bd"/>
</dbReference>
<dbReference type="InterPro" id="IPR009081">
    <property type="entry name" value="PP-bd_ACP"/>
</dbReference>
<dbReference type="InterPro" id="IPR006162">
    <property type="entry name" value="Ppantetheine_attach_site"/>
</dbReference>
<dbReference type="NCBIfam" id="TIGR01733">
    <property type="entry name" value="AA-adenyl-dom"/>
    <property type="match status" value="7"/>
</dbReference>
<dbReference type="NCBIfam" id="NF003417">
    <property type="entry name" value="PRK04813.1"/>
    <property type="match status" value="7"/>
</dbReference>
<dbReference type="PANTHER" id="PTHR45527:SF1">
    <property type="entry name" value="FATTY ACID SYNTHASE"/>
    <property type="match status" value="1"/>
</dbReference>
<dbReference type="PANTHER" id="PTHR45527">
    <property type="entry name" value="NONRIBOSOMAL PEPTIDE SYNTHETASE"/>
    <property type="match status" value="1"/>
</dbReference>
<dbReference type="Pfam" id="PF00501">
    <property type="entry name" value="AMP-binding"/>
    <property type="match status" value="7"/>
</dbReference>
<dbReference type="Pfam" id="PF00668">
    <property type="entry name" value="Condensation"/>
    <property type="match status" value="7"/>
</dbReference>
<dbReference type="Pfam" id="PF00550">
    <property type="entry name" value="PP-binding"/>
    <property type="match status" value="7"/>
</dbReference>
<dbReference type="SMART" id="SM00823">
    <property type="entry name" value="PKS_PP"/>
    <property type="match status" value="6"/>
</dbReference>
<dbReference type="SUPFAM" id="SSF56801">
    <property type="entry name" value="Acetyl-CoA synthetase-like"/>
    <property type="match status" value="7"/>
</dbReference>
<dbReference type="SUPFAM" id="SSF47336">
    <property type="entry name" value="ACP-like"/>
    <property type="match status" value="7"/>
</dbReference>
<dbReference type="SUPFAM" id="SSF52777">
    <property type="entry name" value="CoA-dependent acyltransferases"/>
    <property type="match status" value="15"/>
</dbReference>
<dbReference type="PROSITE" id="PS00455">
    <property type="entry name" value="AMP_BINDING"/>
    <property type="match status" value="6"/>
</dbReference>
<dbReference type="PROSITE" id="PS50075">
    <property type="entry name" value="CARRIER"/>
    <property type="match status" value="7"/>
</dbReference>
<dbReference type="PROSITE" id="PS00012">
    <property type="entry name" value="PHOSPHOPANTETHEINE"/>
    <property type="match status" value="2"/>
</dbReference>
<organism>
    <name type="scientific">Gibberella zeae (strain ATCC MYA-4620 / CBS 123657 / FGSC 9075 / NRRL 31084 / PH-1)</name>
    <name type="common">Wheat head blight fungus</name>
    <name type="synonym">Fusarium graminearum</name>
    <dbReference type="NCBI Taxonomy" id="229533"/>
    <lineage>
        <taxon>Eukaryota</taxon>
        <taxon>Fungi</taxon>
        <taxon>Dikarya</taxon>
        <taxon>Ascomycota</taxon>
        <taxon>Pezizomycotina</taxon>
        <taxon>Sordariomycetes</taxon>
        <taxon>Hypocreomycetidae</taxon>
        <taxon>Hypocreales</taxon>
        <taxon>Nectriaceae</taxon>
        <taxon>Fusarium</taxon>
    </lineage>
</organism>
<proteinExistence type="evidence at transcript level"/>
<comment type="function">
    <text evidence="5 9">Nonribosomal peptide synthetase; part of the gene cluster that mediates the biosynthesis of gramillins A and B, bicyclic lipopeptides that induce cell death in maize leaves but not in wheat leaves (PubMed:30395461). The nonribosomal peptide synthetase GRA1 incorporates respectively a glutamic adic (Glu), a leucine (Leu), a serine (Ser), a hydroxyglutamine (HOGln), a 2-amino decanoic acid, and 2 cysteins (CysB and CysA) (Probable). The biosynthesis of 2-amino decanoic acid incorporated in gramillins could be initiated by a fatty acid synthase composed of the alpha and beta subunits FGSG_00036 and FGSG_11656 (Probable). The cytochrome P450 monooxygenase FGSG_15680 could hydroxylate the fatty acid chain (Probable). Subsequent oxidation to the ketone by the oxidoreductase FGSG_00048 and transamination by aminotransferase FGSG_00049 could form 2-amino-decanoic acid (Probable). On the other hand, FGSG_15680 could also be responsible for the HO-modified glutamine at the gamma-position (Probable). Whether hydroxylation occurs on the fully assembled product or on the Gln residue prior to assembly into the gramillins requires further proof (Probable). The thioredoxin FGSG_00043 could also be required for the disulfide-bond formation between CysA and CysB (Probable). The specific involvement of the remaining proteins from the cluster is more difficult to discern, but could have broader regulatory (FGSG_00040 and FGSG_11657) or enzymatic functions (FGSG_00044 and FGSG_00045) (Probable). The final C-domain of GRA1 does not possess the expected sequence of a termination CT domain, often implicated in macrocyclization and release of a cyclopeptidein fungal NRPs; and the thioesterase FGSG_00047 may act in concert with the terminal C-domain of GRA1 to catalyze the formation of the macrocyclic anhydride and release of the products (Probable).</text>
</comment>
<comment type="pathway">
    <text evidence="4">Mycotoxin biosynthesis.</text>
</comment>
<comment type="induction">
    <text evidence="4">Expressed during infection of maize kernels and exhibits transient expression during barley and wheat spike infection (PubMed:26693688). Coexpressed alongside the trichothecene biosynthesis gene cluster (PubMed:26693688).</text>
</comment>
<comment type="domain">
    <text evidence="9">NRP synthetases are composed of discrete domains (adenylation (A), thiolation (T) or peptidyl carrier protein (PCP) and condensation (C) domains) which when grouped together are referred to as a single module. Each module is responsible for the recognition (via the A domain) and incorporation of a single amino acid into the growing peptide product. Thus, an NRP synthetase is generally composed of one or more modules and can terminate in a thioesterase domain (TE) that releases the newly synthesized peptide from the enzyme. Occasionally, epimerase (E) domains (responsible for L- to D-amino acid conversion) are present within the NRP synthetase. GRA1 has the following architecture: A-T-C-A-T-C-A-T-C-A-T-C-A-T-C-A-T-C-A-T-C.</text>
</comment>
<comment type="disruption phenotype">
    <text evidence="5">Abolishes the production of gramillins A and B.</text>
</comment>
<comment type="similarity">
    <text evidence="8">Belongs to the NRP synthetase family.</text>
</comment>